<proteinExistence type="inferred from homology"/>
<keyword id="KW-1185">Reference proteome</keyword>
<keyword id="KW-0687">Ribonucleoprotein</keyword>
<keyword id="KW-0689">Ribosomal protein</keyword>
<keyword id="KW-0694">RNA-binding</keyword>
<keyword id="KW-0699">rRNA-binding</keyword>
<keyword id="KW-0820">tRNA-binding</keyword>
<reference key="1">
    <citation type="journal article" date="2002" name="Proc. Natl. Acad. Sci. U.S.A.">
        <title>The complete genome sequence of Chlorobium tepidum TLS, a photosynthetic, anaerobic, green-sulfur bacterium.</title>
        <authorList>
            <person name="Eisen J.A."/>
            <person name="Nelson K.E."/>
            <person name="Paulsen I.T."/>
            <person name="Heidelberg J.F."/>
            <person name="Wu M."/>
            <person name="Dodson R.J."/>
            <person name="DeBoy R.T."/>
            <person name="Gwinn M.L."/>
            <person name="Nelson W.C."/>
            <person name="Haft D.H."/>
            <person name="Hickey E.K."/>
            <person name="Peterson J.D."/>
            <person name="Durkin A.S."/>
            <person name="Kolonay J.F."/>
            <person name="Yang F."/>
            <person name="Holt I.E."/>
            <person name="Umayam L.A."/>
            <person name="Mason T.M."/>
            <person name="Brenner M."/>
            <person name="Shea T.P."/>
            <person name="Parksey D.S."/>
            <person name="Nierman W.C."/>
            <person name="Feldblyum T.V."/>
            <person name="Hansen C.L."/>
            <person name="Craven M.B."/>
            <person name="Radune D."/>
            <person name="Vamathevan J.J."/>
            <person name="Khouri H.M."/>
            <person name="White O."/>
            <person name="Gruber T.M."/>
            <person name="Ketchum K.A."/>
            <person name="Venter J.C."/>
            <person name="Tettelin H."/>
            <person name="Bryant D.A."/>
            <person name="Fraser C.M."/>
        </authorList>
    </citation>
    <scope>NUCLEOTIDE SEQUENCE [LARGE SCALE GENOMIC DNA]</scope>
    <source>
        <strain>ATCC 49652 / DSM 12025 / NBRC 103806 / TLS</strain>
    </source>
</reference>
<accession>Q8KAJ5</accession>
<dbReference type="EMBL" id="AE006470">
    <property type="protein sequence ID" value="AAM73381.1"/>
    <property type="molecule type" value="Genomic_DNA"/>
</dbReference>
<dbReference type="RefSeq" id="NP_663039.1">
    <property type="nucleotide sequence ID" value="NC_002932.3"/>
</dbReference>
<dbReference type="RefSeq" id="WP_010933818.1">
    <property type="nucleotide sequence ID" value="NC_002932.3"/>
</dbReference>
<dbReference type="SMR" id="Q8KAJ5"/>
<dbReference type="STRING" id="194439.CT2165"/>
<dbReference type="EnsemblBacteria" id="AAM73381">
    <property type="protein sequence ID" value="AAM73381"/>
    <property type="gene ID" value="CT2165"/>
</dbReference>
<dbReference type="KEGG" id="cte:CT2165"/>
<dbReference type="PATRIC" id="fig|194439.7.peg.1964"/>
<dbReference type="eggNOG" id="COG0099">
    <property type="taxonomic scope" value="Bacteria"/>
</dbReference>
<dbReference type="HOGENOM" id="CLU_103849_1_2_10"/>
<dbReference type="OrthoDB" id="9803610at2"/>
<dbReference type="Proteomes" id="UP000001007">
    <property type="component" value="Chromosome"/>
</dbReference>
<dbReference type="GO" id="GO:0005829">
    <property type="term" value="C:cytosol"/>
    <property type="evidence" value="ECO:0007669"/>
    <property type="project" value="TreeGrafter"/>
</dbReference>
<dbReference type="GO" id="GO:0015935">
    <property type="term" value="C:small ribosomal subunit"/>
    <property type="evidence" value="ECO:0007669"/>
    <property type="project" value="TreeGrafter"/>
</dbReference>
<dbReference type="GO" id="GO:0019843">
    <property type="term" value="F:rRNA binding"/>
    <property type="evidence" value="ECO:0007669"/>
    <property type="project" value="UniProtKB-UniRule"/>
</dbReference>
<dbReference type="GO" id="GO:0003735">
    <property type="term" value="F:structural constituent of ribosome"/>
    <property type="evidence" value="ECO:0007669"/>
    <property type="project" value="InterPro"/>
</dbReference>
<dbReference type="GO" id="GO:0000049">
    <property type="term" value="F:tRNA binding"/>
    <property type="evidence" value="ECO:0007669"/>
    <property type="project" value="UniProtKB-UniRule"/>
</dbReference>
<dbReference type="GO" id="GO:0006412">
    <property type="term" value="P:translation"/>
    <property type="evidence" value="ECO:0007669"/>
    <property type="project" value="UniProtKB-UniRule"/>
</dbReference>
<dbReference type="FunFam" id="1.10.8.50:FF:000001">
    <property type="entry name" value="30S ribosomal protein S13"/>
    <property type="match status" value="1"/>
</dbReference>
<dbReference type="FunFam" id="4.10.910.10:FF:000001">
    <property type="entry name" value="30S ribosomal protein S13"/>
    <property type="match status" value="1"/>
</dbReference>
<dbReference type="Gene3D" id="1.10.8.50">
    <property type="match status" value="1"/>
</dbReference>
<dbReference type="Gene3D" id="4.10.910.10">
    <property type="entry name" value="30s ribosomal protein s13, domain 2"/>
    <property type="match status" value="1"/>
</dbReference>
<dbReference type="HAMAP" id="MF_01315">
    <property type="entry name" value="Ribosomal_uS13"/>
    <property type="match status" value="1"/>
</dbReference>
<dbReference type="InterPro" id="IPR027437">
    <property type="entry name" value="Rbsml_uS13_C"/>
</dbReference>
<dbReference type="InterPro" id="IPR001892">
    <property type="entry name" value="Ribosomal_uS13"/>
</dbReference>
<dbReference type="InterPro" id="IPR010979">
    <property type="entry name" value="Ribosomal_uS13-like_H2TH"/>
</dbReference>
<dbReference type="InterPro" id="IPR019980">
    <property type="entry name" value="Ribosomal_uS13_bac-type"/>
</dbReference>
<dbReference type="InterPro" id="IPR018269">
    <property type="entry name" value="Ribosomal_uS13_CS"/>
</dbReference>
<dbReference type="NCBIfam" id="TIGR03631">
    <property type="entry name" value="uS13_bact"/>
    <property type="match status" value="1"/>
</dbReference>
<dbReference type="PANTHER" id="PTHR10871">
    <property type="entry name" value="30S RIBOSOMAL PROTEIN S13/40S RIBOSOMAL PROTEIN S18"/>
    <property type="match status" value="1"/>
</dbReference>
<dbReference type="PANTHER" id="PTHR10871:SF1">
    <property type="entry name" value="SMALL RIBOSOMAL SUBUNIT PROTEIN US13M"/>
    <property type="match status" value="1"/>
</dbReference>
<dbReference type="Pfam" id="PF00416">
    <property type="entry name" value="Ribosomal_S13"/>
    <property type="match status" value="1"/>
</dbReference>
<dbReference type="PIRSF" id="PIRSF002134">
    <property type="entry name" value="Ribosomal_S13"/>
    <property type="match status" value="1"/>
</dbReference>
<dbReference type="SUPFAM" id="SSF46946">
    <property type="entry name" value="S13-like H2TH domain"/>
    <property type="match status" value="1"/>
</dbReference>
<dbReference type="PROSITE" id="PS00646">
    <property type="entry name" value="RIBOSOMAL_S13_1"/>
    <property type="match status" value="1"/>
</dbReference>
<dbReference type="PROSITE" id="PS50159">
    <property type="entry name" value="RIBOSOMAL_S13_2"/>
    <property type="match status" value="1"/>
</dbReference>
<feature type="chain" id="PRO_0000132080" description="Small ribosomal subunit protein uS13">
    <location>
        <begin position="1"/>
        <end position="125"/>
    </location>
</feature>
<feature type="region of interest" description="Disordered" evidence="2">
    <location>
        <begin position="93"/>
        <end position="125"/>
    </location>
</feature>
<organism>
    <name type="scientific">Chlorobaculum tepidum (strain ATCC 49652 / DSM 12025 / NBRC 103806 / TLS)</name>
    <name type="common">Chlorobium tepidum</name>
    <dbReference type="NCBI Taxonomy" id="194439"/>
    <lineage>
        <taxon>Bacteria</taxon>
        <taxon>Pseudomonadati</taxon>
        <taxon>Chlorobiota</taxon>
        <taxon>Chlorobiia</taxon>
        <taxon>Chlorobiales</taxon>
        <taxon>Chlorobiaceae</taxon>
        <taxon>Chlorobaculum</taxon>
    </lineage>
</organism>
<gene>
    <name evidence="1" type="primary">rpsM</name>
    <name type="ordered locus">CT2165</name>
</gene>
<name>RS13_CHLTE</name>
<sequence length="125" mass="13834">MRLAGVNLPLNKHAVIALTYVYGIGNTSAKNILAKAGVAPDKKISELSDEEAHAIREIIGNEYTVEGEARAEQQLSIKRLMDIGCYRGLRHRRSLPVRGQRTRTNARTRKGKRKTVAGKKKAGKK</sequence>
<comment type="function">
    <text evidence="1">Located at the top of the head of the 30S subunit, it contacts several helices of the 16S rRNA. In the 70S ribosome it contacts the 23S rRNA (bridge B1a) and protein L5 of the 50S subunit (bridge B1b), connecting the 2 subunits; these bridges are implicated in subunit movement. Contacts the tRNAs in the A and P-sites.</text>
</comment>
<comment type="subunit">
    <text evidence="1">Part of the 30S ribosomal subunit. Forms a loose heterodimer with protein S19. Forms two bridges to the 50S subunit in the 70S ribosome.</text>
</comment>
<comment type="similarity">
    <text evidence="1">Belongs to the universal ribosomal protein uS13 family.</text>
</comment>
<protein>
    <recommendedName>
        <fullName evidence="1">Small ribosomal subunit protein uS13</fullName>
    </recommendedName>
    <alternativeName>
        <fullName evidence="3">30S ribosomal protein S13</fullName>
    </alternativeName>
</protein>
<evidence type="ECO:0000255" key="1">
    <source>
        <dbReference type="HAMAP-Rule" id="MF_01315"/>
    </source>
</evidence>
<evidence type="ECO:0000256" key="2">
    <source>
        <dbReference type="SAM" id="MobiDB-lite"/>
    </source>
</evidence>
<evidence type="ECO:0000305" key="3"/>